<feature type="chain" id="PRO_0000279392" description="Tektin-like protein 1">
    <location>
        <begin position="1"/>
        <end position="499"/>
    </location>
</feature>
<feature type="region of interest" description="Disordered" evidence="4">
    <location>
        <begin position="265"/>
        <end position="286"/>
    </location>
</feature>
<feature type="coiled-coil region" evidence="3">
    <location>
        <begin position="201"/>
        <end position="225"/>
    </location>
</feature>
<feature type="coiled-coil region" evidence="3">
    <location>
        <begin position="308"/>
        <end position="328"/>
    </location>
</feature>
<feature type="modified residue" description="Phosphoserine" evidence="1">
    <location>
        <position position="14"/>
    </location>
</feature>
<feature type="modified residue" description="Phosphotyrosine" evidence="14">
    <location>
        <position position="372"/>
    </location>
</feature>
<feature type="sequence conflict" description="In Ref. 3; BAB30245." evidence="9" ref="3">
    <original>R</original>
    <variation>C</variation>
    <location>
        <position position="118"/>
    </location>
</feature>
<feature type="sequence conflict" description="In Ref. 3; BAB30245." evidence="9" ref="3">
    <original>V</original>
    <variation>A</variation>
    <location>
        <position position="179"/>
    </location>
</feature>
<feature type="sequence conflict" description="In Ref. 3; BAB30245." evidence="9" ref="3">
    <original>D</original>
    <variation>H</variation>
    <location>
        <position position="222"/>
    </location>
</feature>
<organism>
    <name type="scientific">Mus musculus</name>
    <name type="common">Mouse</name>
    <dbReference type="NCBI Taxonomy" id="10090"/>
    <lineage>
        <taxon>Eukaryota</taxon>
        <taxon>Metazoa</taxon>
        <taxon>Chordata</taxon>
        <taxon>Craniata</taxon>
        <taxon>Vertebrata</taxon>
        <taxon>Euteleostomi</taxon>
        <taxon>Mammalia</taxon>
        <taxon>Eutheria</taxon>
        <taxon>Euarchontoglires</taxon>
        <taxon>Glires</taxon>
        <taxon>Rodentia</taxon>
        <taxon>Myomorpha</taxon>
        <taxon>Muroidea</taxon>
        <taxon>Muridae</taxon>
        <taxon>Murinae</taxon>
        <taxon>Mus</taxon>
        <taxon>Mus</taxon>
    </lineage>
</organism>
<keyword id="KW-0002">3D-structure</keyword>
<keyword id="KW-0966">Cell projection</keyword>
<keyword id="KW-0969">Cilium</keyword>
<keyword id="KW-0175">Coiled coil</keyword>
<keyword id="KW-0963">Cytoplasm</keyword>
<keyword id="KW-0206">Cytoskeleton</keyword>
<keyword id="KW-0282">Flagellum</keyword>
<keyword id="KW-0597">Phosphoprotein</keyword>
<keyword id="KW-1185">Reference proteome</keyword>
<proteinExistence type="evidence at protein level"/>
<evidence type="ECO:0000250" key="1">
    <source>
        <dbReference type="UniProtKB" id="Q4V7B5"/>
    </source>
</evidence>
<evidence type="ECO:0000250" key="2">
    <source>
        <dbReference type="UniProtKB" id="Q8IYK2"/>
    </source>
</evidence>
<evidence type="ECO:0000255" key="3"/>
<evidence type="ECO:0000256" key="4">
    <source>
        <dbReference type="SAM" id="MobiDB-lite"/>
    </source>
</evidence>
<evidence type="ECO:0000269" key="5">
    <source>
    </source>
</evidence>
<evidence type="ECO:0000269" key="6">
    <source>
    </source>
</evidence>
<evidence type="ECO:0000269" key="7">
    <source>
    </source>
</evidence>
<evidence type="ECO:0000303" key="8">
    <source>
    </source>
</evidence>
<evidence type="ECO:0000305" key="9"/>
<evidence type="ECO:0007744" key="10">
    <source>
        <dbReference type="PDB" id="8I7O"/>
    </source>
</evidence>
<evidence type="ECO:0007744" key="11">
    <source>
        <dbReference type="PDB" id="8I7R"/>
    </source>
</evidence>
<evidence type="ECO:0007744" key="12">
    <source>
        <dbReference type="PDB" id="8IYJ"/>
    </source>
</evidence>
<evidence type="ECO:0007744" key="13">
    <source>
        <dbReference type="PDB" id="8TO0"/>
    </source>
</evidence>
<evidence type="ECO:0007744" key="14">
    <source>
    </source>
</evidence>
<name>TEKL1_MOUSE</name>
<comment type="function">
    <text evidence="5 6 7">Microtubule inner protein (MIP) part of the dynein-decorated doublet microtubules (DMTs) in sperm flagellar axoneme, which is required for motile flagellum beating (PubMed:37295417, PubMed:37865089, PubMed:37989994). Forms an extensive interaction network cross-linking the lumen of axonemal doublet microtubules (PubMed:37865089).</text>
</comment>
<comment type="subunit">
    <text evidence="5 6 7">Microtubule inner protein component of sperm flagellar doublet microtubules.</text>
</comment>
<comment type="subcellular location">
    <subcellularLocation>
        <location evidence="5 6 7">Cytoplasm</location>
        <location evidence="5 6 7">Cytoskeleton</location>
        <location evidence="5 6 7">Flagellum axoneme</location>
    </subcellularLocation>
</comment>
<comment type="sequence caution" evidence="9">
    <conflict type="frameshift">
        <sequence resource="EMBL-CDS" id="BAB30245"/>
    </conflict>
</comment>
<accession>Q9D4K7</accession>
<accession>G3X9S0</accession>
<dbReference type="EMBL" id="AC159747">
    <property type="status" value="NOT_ANNOTATED_CDS"/>
    <property type="molecule type" value="Genomic_DNA"/>
</dbReference>
<dbReference type="EMBL" id="CH466553">
    <property type="protein sequence ID" value="EDL31718.1"/>
    <property type="molecule type" value="Genomic_DNA"/>
</dbReference>
<dbReference type="EMBL" id="AK016452">
    <property type="protein sequence ID" value="BAB30245.1"/>
    <property type="status" value="ALT_FRAME"/>
    <property type="molecule type" value="mRNA"/>
</dbReference>
<dbReference type="CCDS" id="CCDS48614.1"/>
<dbReference type="RefSeq" id="NP_081906.1">
    <property type="nucleotide sequence ID" value="NM_027630.1"/>
</dbReference>
<dbReference type="PDB" id="8I7O">
    <property type="method" value="EM"/>
    <property type="resolution" value="4.50 A"/>
    <property type="chains" value="K2/K3/K4=1-499"/>
</dbReference>
<dbReference type="PDB" id="8I7R">
    <property type="method" value="EM"/>
    <property type="resolution" value="6.50 A"/>
    <property type="chains" value="K1/K2/K3/K4/K5=1-499"/>
</dbReference>
<dbReference type="PDB" id="8IYJ">
    <property type="method" value="EM"/>
    <property type="resolution" value="3.50 A"/>
    <property type="chains" value="b1/b2/b3/b4/b5=1-499"/>
</dbReference>
<dbReference type="PDB" id="8TO0">
    <property type="method" value="EM"/>
    <property type="resolution" value="7.70 A"/>
    <property type="chains" value="C/D/E/F/H=1-499"/>
</dbReference>
<dbReference type="PDBsum" id="8I7O"/>
<dbReference type="PDBsum" id="8I7R"/>
<dbReference type="PDBsum" id="8IYJ"/>
<dbReference type="PDBsum" id="8TO0"/>
<dbReference type="EMDB" id="EMD-35229"/>
<dbReference type="EMDB" id="EMD-35230"/>
<dbReference type="EMDB" id="EMD-35823"/>
<dbReference type="EMDB" id="EMD-41431"/>
<dbReference type="SMR" id="Q9D4K7"/>
<dbReference type="BioGRID" id="214386">
    <property type="interactions" value="1"/>
</dbReference>
<dbReference type="FunCoup" id="Q9D4K7">
    <property type="interactions" value="36"/>
</dbReference>
<dbReference type="STRING" id="10090.ENSMUSP00000101022"/>
<dbReference type="GlyGen" id="Q9D4K7">
    <property type="glycosylation" value="1 site"/>
</dbReference>
<dbReference type="iPTMnet" id="Q9D4K7"/>
<dbReference type="PhosphoSitePlus" id="Q9D4K7"/>
<dbReference type="PaxDb" id="10090-ENSMUSP00000101022"/>
<dbReference type="ProteomicsDB" id="281479"/>
<dbReference type="Antibodypedia" id="59288">
    <property type="antibodies" value="25 antibodies from 13 providers"/>
</dbReference>
<dbReference type="Ensembl" id="ENSMUST00000105383.4">
    <property type="protein sequence ID" value="ENSMUSP00000101022.3"/>
    <property type="gene ID" value="ENSMUSG00000078442.4"/>
</dbReference>
<dbReference type="GeneID" id="70976"/>
<dbReference type="KEGG" id="mmu:70976"/>
<dbReference type="UCSC" id="uc007fyf.2">
    <property type="organism name" value="mouse"/>
</dbReference>
<dbReference type="AGR" id="MGI:1918226"/>
<dbReference type="CTD" id="126402"/>
<dbReference type="MGI" id="MGI:1918226">
    <property type="gene designation" value="Tektl1"/>
</dbReference>
<dbReference type="VEuPathDB" id="HostDB:ENSMUSG00000078442"/>
<dbReference type="eggNOG" id="ENOG502RUEW">
    <property type="taxonomic scope" value="Eukaryota"/>
</dbReference>
<dbReference type="GeneTree" id="ENSGT00390000003207"/>
<dbReference type="HOGENOM" id="CLU_052125_0_0_1"/>
<dbReference type="InParanoid" id="Q9D4K7"/>
<dbReference type="OMA" id="YTPECAT"/>
<dbReference type="OrthoDB" id="9896158at2759"/>
<dbReference type="PhylomeDB" id="Q9D4K7"/>
<dbReference type="TreeFam" id="TF329813"/>
<dbReference type="BioGRID-ORCS" id="70976">
    <property type="hits" value="3 hits in 76 CRISPR screens"/>
</dbReference>
<dbReference type="ChiTaRS" id="Ccdc105">
    <property type="organism name" value="mouse"/>
</dbReference>
<dbReference type="PRO" id="PR:Q9D4K7"/>
<dbReference type="Proteomes" id="UP000000589">
    <property type="component" value="Chromosome 10"/>
</dbReference>
<dbReference type="RNAct" id="Q9D4K7">
    <property type="molecule type" value="protein"/>
</dbReference>
<dbReference type="Bgee" id="ENSMUSG00000078442">
    <property type="expression patterns" value="Expressed in seminiferous tubule of testis and 20 other cell types or tissues"/>
</dbReference>
<dbReference type="GO" id="GO:0160112">
    <property type="term" value="C:axonemal B tubule inner sheath"/>
    <property type="evidence" value="ECO:0000314"/>
    <property type="project" value="UniProtKB"/>
</dbReference>
<dbReference type="GO" id="GO:0036126">
    <property type="term" value="C:sperm flagellum"/>
    <property type="evidence" value="ECO:0000314"/>
    <property type="project" value="UniProtKB"/>
</dbReference>
<dbReference type="GO" id="GO:0030317">
    <property type="term" value="P:flagellated sperm motility"/>
    <property type="evidence" value="ECO:0000314"/>
    <property type="project" value="UniProtKB"/>
</dbReference>
<dbReference type="InterPro" id="IPR048256">
    <property type="entry name" value="Tektin-like"/>
</dbReference>
<dbReference type="InterPro" id="IPR038949">
    <property type="entry name" value="TEKTL1"/>
</dbReference>
<dbReference type="PANTHER" id="PTHR35081">
    <property type="entry name" value="COILED-COIL DOMAIN-CONTAINING PROTEIN 105"/>
    <property type="match status" value="1"/>
</dbReference>
<dbReference type="PANTHER" id="PTHR35081:SF1">
    <property type="entry name" value="COILED-COIL DOMAIN-CONTAINING PROTEIN 105"/>
    <property type="match status" value="1"/>
</dbReference>
<dbReference type="Pfam" id="PF03148">
    <property type="entry name" value="Tektin"/>
    <property type="match status" value="1"/>
</dbReference>
<reference key="1">
    <citation type="journal article" date="2009" name="PLoS Biol.">
        <title>Lineage-specific biology revealed by a finished genome assembly of the mouse.</title>
        <authorList>
            <person name="Church D.M."/>
            <person name="Goodstadt L."/>
            <person name="Hillier L.W."/>
            <person name="Zody M.C."/>
            <person name="Goldstein S."/>
            <person name="She X."/>
            <person name="Bult C.J."/>
            <person name="Agarwala R."/>
            <person name="Cherry J.L."/>
            <person name="DiCuccio M."/>
            <person name="Hlavina W."/>
            <person name="Kapustin Y."/>
            <person name="Meric P."/>
            <person name="Maglott D."/>
            <person name="Birtle Z."/>
            <person name="Marques A.C."/>
            <person name="Graves T."/>
            <person name="Zhou S."/>
            <person name="Teague B."/>
            <person name="Potamousis K."/>
            <person name="Churas C."/>
            <person name="Place M."/>
            <person name="Herschleb J."/>
            <person name="Runnheim R."/>
            <person name="Forrest D."/>
            <person name="Amos-Landgraf J."/>
            <person name="Schwartz D.C."/>
            <person name="Cheng Z."/>
            <person name="Lindblad-Toh K."/>
            <person name="Eichler E.E."/>
            <person name="Ponting C.P."/>
        </authorList>
    </citation>
    <scope>NUCLEOTIDE SEQUENCE [LARGE SCALE GENOMIC DNA]</scope>
    <source>
        <strain>C57BL/6J</strain>
    </source>
</reference>
<reference key="2">
    <citation type="submission" date="2005-07" db="EMBL/GenBank/DDBJ databases">
        <authorList>
            <person name="Mural R.J."/>
            <person name="Adams M.D."/>
            <person name="Myers E.W."/>
            <person name="Smith H.O."/>
            <person name="Venter J.C."/>
        </authorList>
    </citation>
    <scope>NUCLEOTIDE SEQUENCE [LARGE SCALE GENOMIC DNA]</scope>
</reference>
<reference key="3">
    <citation type="journal article" date="2005" name="Science">
        <title>The transcriptional landscape of the mammalian genome.</title>
        <authorList>
            <person name="Carninci P."/>
            <person name="Kasukawa T."/>
            <person name="Katayama S."/>
            <person name="Gough J."/>
            <person name="Frith M.C."/>
            <person name="Maeda N."/>
            <person name="Oyama R."/>
            <person name="Ravasi T."/>
            <person name="Lenhard B."/>
            <person name="Wells C."/>
            <person name="Kodzius R."/>
            <person name="Shimokawa K."/>
            <person name="Bajic V.B."/>
            <person name="Brenner S.E."/>
            <person name="Batalov S."/>
            <person name="Forrest A.R."/>
            <person name="Zavolan M."/>
            <person name="Davis M.J."/>
            <person name="Wilming L.G."/>
            <person name="Aidinis V."/>
            <person name="Allen J.E."/>
            <person name="Ambesi-Impiombato A."/>
            <person name="Apweiler R."/>
            <person name="Aturaliya R.N."/>
            <person name="Bailey T.L."/>
            <person name="Bansal M."/>
            <person name="Baxter L."/>
            <person name="Beisel K.W."/>
            <person name="Bersano T."/>
            <person name="Bono H."/>
            <person name="Chalk A.M."/>
            <person name="Chiu K.P."/>
            <person name="Choudhary V."/>
            <person name="Christoffels A."/>
            <person name="Clutterbuck D.R."/>
            <person name="Crowe M.L."/>
            <person name="Dalla E."/>
            <person name="Dalrymple B.P."/>
            <person name="de Bono B."/>
            <person name="Della Gatta G."/>
            <person name="di Bernardo D."/>
            <person name="Down T."/>
            <person name="Engstrom P."/>
            <person name="Fagiolini M."/>
            <person name="Faulkner G."/>
            <person name="Fletcher C.F."/>
            <person name="Fukushima T."/>
            <person name="Furuno M."/>
            <person name="Futaki S."/>
            <person name="Gariboldi M."/>
            <person name="Georgii-Hemming P."/>
            <person name="Gingeras T.R."/>
            <person name="Gojobori T."/>
            <person name="Green R.E."/>
            <person name="Gustincich S."/>
            <person name="Harbers M."/>
            <person name="Hayashi Y."/>
            <person name="Hensch T.K."/>
            <person name="Hirokawa N."/>
            <person name="Hill D."/>
            <person name="Huminiecki L."/>
            <person name="Iacono M."/>
            <person name="Ikeo K."/>
            <person name="Iwama A."/>
            <person name="Ishikawa T."/>
            <person name="Jakt M."/>
            <person name="Kanapin A."/>
            <person name="Katoh M."/>
            <person name="Kawasawa Y."/>
            <person name="Kelso J."/>
            <person name="Kitamura H."/>
            <person name="Kitano H."/>
            <person name="Kollias G."/>
            <person name="Krishnan S.P."/>
            <person name="Kruger A."/>
            <person name="Kummerfeld S.K."/>
            <person name="Kurochkin I.V."/>
            <person name="Lareau L.F."/>
            <person name="Lazarevic D."/>
            <person name="Lipovich L."/>
            <person name="Liu J."/>
            <person name="Liuni S."/>
            <person name="McWilliam S."/>
            <person name="Madan Babu M."/>
            <person name="Madera M."/>
            <person name="Marchionni L."/>
            <person name="Matsuda H."/>
            <person name="Matsuzawa S."/>
            <person name="Miki H."/>
            <person name="Mignone F."/>
            <person name="Miyake S."/>
            <person name="Morris K."/>
            <person name="Mottagui-Tabar S."/>
            <person name="Mulder N."/>
            <person name="Nakano N."/>
            <person name="Nakauchi H."/>
            <person name="Ng P."/>
            <person name="Nilsson R."/>
            <person name="Nishiguchi S."/>
            <person name="Nishikawa S."/>
            <person name="Nori F."/>
            <person name="Ohara O."/>
            <person name="Okazaki Y."/>
            <person name="Orlando V."/>
            <person name="Pang K.C."/>
            <person name="Pavan W.J."/>
            <person name="Pavesi G."/>
            <person name="Pesole G."/>
            <person name="Petrovsky N."/>
            <person name="Piazza S."/>
            <person name="Reed J."/>
            <person name="Reid J.F."/>
            <person name="Ring B.Z."/>
            <person name="Ringwald M."/>
            <person name="Rost B."/>
            <person name="Ruan Y."/>
            <person name="Salzberg S.L."/>
            <person name="Sandelin A."/>
            <person name="Schneider C."/>
            <person name="Schoenbach C."/>
            <person name="Sekiguchi K."/>
            <person name="Semple C.A."/>
            <person name="Seno S."/>
            <person name="Sessa L."/>
            <person name="Sheng Y."/>
            <person name="Shibata Y."/>
            <person name="Shimada H."/>
            <person name="Shimada K."/>
            <person name="Silva D."/>
            <person name="Sinclair B."/>
            <person name="Sperling S."/>
            <person name="Stupka E."/>
            <person name="Sugiura K."/>
            <person name="Sultana R."/>
            <person name="Takenaka Y."/>
            <person name="Taki K."/>
            <person name="Tammoja K."/>
            <person name="Tan S.L."/>
            <person name="Tang S."/>
            <person name="Taylor M.S."/>
            <person name="Tegner J."/>
            <person name="Teichmann S.A."/>
            <person name="Ueda H.R."/>
            <person name="van Nimwegen E."/>
            <person name="Verardo R."/>
            <person name="Wei C.L."/>
            <person name="Yagi K."/>
            <person name="Yamanishi H."/>
            <person name="Zabarovsky E."/>
            <person name="Zhu S."/>
            <person name="Zimmer A."/>
            <person name="Hide W."/>
            <person name="Bult C."/>
            <person name="Grimmond S.M."/>
            <person name="Teasdale R.D."/>
            <person name="Liu E.T."/>
            <person name="Brusic V."/>
            <person name="Quackenbush J."/>
            <person name="Wahlestedt C."/>
            <person name="Mattick J.S."/>
            <person name="Hume D.A."/>
            <person name="Kai C."/>
            <person name="Sasaki D."/>
            <person name="Tomaru Y."/>
            <person name="Fukuda S."/>
            <person name="Kanamori-Katayama M."/>
            <person name="Suzuki M."/>
            <person name="Aoki J."/>
            <person name="Arakawa T."/>
            <person name="Iida J."/>
            <person name="Imamura K."/>
            <person name="Itoh M."/>
            <person name="Kato T."/>
            <person name="Kawaji H."/>
            <person name="Kawagashira N."/>
            <person name="Kawashima T."/>
            <person name="Kojima M."/>
            <person name="Kondo S."/>
            <person name="Konno H."/>
            <person name="Nakano K."/>
            <person name="Ninomiya N."/>
            <person name="Nishio T."/>
            <person name="Okada M."/>
            <person name="Plessy C."/>
            <person name="Shibata K."/>
            <person name="Shiraki T."/>
            <person name="Suzuki S."/>
            <person name="Tagami M."/>
            <person name="Waki K."/>
            <person name="Watahiki A."/>
            <person name="Okamura-Oho Y."/>
            <person name="Suzuki H."/>
            <person name="Kawai J."/>
            <person name="Hayashizaki Y."/>
        </authorList>
    </citation>
    <scope>NUCLEOTIDE SEQUENCE [LARGE SCALE MRNA] OF 1-429</scope>
    <source>
        <strain>C57BL/6J</strain>
        <tissue>Testis</tissue>
    </source>
</reference>
<reference key="4">
    <citation type="journal article" date="2010" name="Cell">
        <title>A tissue-specific atlas of mouse protein phosphorylation and expression.</title>
        <authorList>
            <person name="Huttlin E.L."/>
            <person name="Jedrychowski M.P."/>
            <person name="Elias J.E."/>
            <person name="Goswami T."/>
            <person name="Rad R."/>
            <person name="Beausoleil S.A."/>
            <person name="Villen J."/>
            <person name="Haas W."/>
            <person name="Sowa M.E."/>
            <person name="Gygi S.P."/>
        </authorList>
    </citation>
    <scope>PHOSPHORYLATION [LARGE SCALE ANALYSIS] AT TYR-372</scope>
    <scope>IDENTIFICATION BY MASS SPECTROMETRY [LARGE SCALE ANALYSIS]</scope>
    <source>
        <tissue>Brain</tissue>
    </source>
</reference>
<reference evidence="12" key="5">
    <citation type="journal article" date="2023" name="Cell">
        <title>Structures of sperm flagellar doublet microtubules expand the genetic spectrum of male infertility.</title>
        <authorList>
            <person name="Zhou L."/>
            <person name="Liu H."/>
            <person name="Liu S."/>
            <person name="Yang X."/>
            <person name="Dong Y."/>
            <person name="Pan Y."/>
            <person name="Xiao Z."/>
            <person name="Zheng B."/>
            <person name="Sun Y."/>
            <person name="Huang P."/>
            <person name="Zhang X."/>
            <person name="Hu J."/>
            <person name="Sun R."/>
            <person name="Feng S."/>
            <person name="Zhu Y."/>
            <person name="Liu M."/>
            <person name="Gui M."/>
            <person name="Wu J."/>
        </authorList>
    </citation>
    <scope>STRUCTURE BY ELECTRON MICROSCOPY (3.50 ANGSTROMS) OF SPERM FLAGELLAR DOUBLET MICROTUBULES</scope>
    <scope>FUNCTION</scope>
    <scope>SUBCELLULAR LOCATION</scope>
    <scope>SUBUNIT</scope>
</reference>
<reference evidence="13" key="6">
    <citation type="journal article" date="2023" name="Cell">
        <title>De novo protein identification in mammalian sperm using in situ cryoelectron tomography and AlphaFold2 docking.</title>
        <authorList>
            <person name="Chen Z."/>
            <person name="Shiozaki M."/>
            <person name="Haas K.M."/>
            <person name="Skinner W.M."/>
            <person name="Zhao S."/>
            <person name="Guo C."/>
            <person name="Polacco B.J."/>
            <person name="Yu Z."/>
            <person name="Krogan N.J."/>
            <person name="Lishko P.V."/>
            <person name="Kaake R.M."/>
            <person name="Vale R.D."/>
            <person name="Agard D.A."/>
        </authorList>
    </citation>
    <scope>STRUCTURE BY ELECTRON MICROSCOPY (7.70 ANGSTROMS) OF SPERM FLAGELLAR DOUBLET MICROTUBULES</scope>
    <scope>FUNCTION</scope>
    <scope>SUBCELLULAR LOCATION</scope>
    <scope>SUBUNIT</scope>
</reference>
<reference evidence="10 11" key="7">
    <citation type="journal article" date="2023" name="Cell Discov.">
        <title>In-cell structural insight into the stability of sperm microtubule doublet.</title>
        <authorList>
            <person name="Tai L."/>
            <person name="Yin G."/>
            <person name="Huang X."/>
            <person name="Sun F."/>
            <person name="Zhu Y."/>
        </authorList>
    </citation>
    <scope>STRUCTURE BY ELECTRON MICROSCOPY (4.50 ANGSTROMS)</scope>
    <scope>FUNCTION</scope>
    <scope>SUBUNIT</scope>
    <scope>SUBCELLULAR LOCATION</scope>
</reference>
<protein>
    <recommendedName>
        <fullName evidence="2">Tektin-like protein 1</fullName>
    </recommendedName>
    <alternativeName>
        <fullName evidence="8">Coiled-coil domain-containing protein 105</fullName>
    </alternativeName>
</protein>
<sequence>MPVLLPSTDPGQDSRVGAPEWRQAAKATSRKAHLLTDRCGQEAVTMWQPKDSVLDPNVAHHLGRAAYMEPWRFRVEMLKGGGTLEKPPPGEGVTLWKGKMKPPAWYARLPLPMHRDARAQQTAEVVHAHARGARLTAARLGRAQHQINGQLRLLLRQREATDRRLSEVRKGLLINQQSVKLRGYRPKCEKIPDKADSLLVWEKKELKSMKRKMEKDMEISEDLLKALASCRDTLDFYCQERLQAVELMNQPLDKVLEQAGRHSWVDITRPPTPRTQGLKTPPPDPIGTYTPACAKALFEAKRLLMESKDILTEMAKNEVDIQNQQQEISNRVCSSLAQKMRETLELKERMTMTLGLMRGTIHRCMKFNQEMYVTRGIIKGPLLKRNLEAREKLNRPLVRMYQRHVGTQLPEATRLAQGTDLLTRHNLHMEKNLKELRTTHDNLAWGLNCKKIGHDVDYDVVRLRLRQRHPHVCYEQAQRLVNDWDPPTPARSQTNTASK</sequence>
<gene>
    <name evidence="2" type="primary">Tektl1</name>
    <name evidence="8" type="synonym">Ccdc105</name>
</gene>